<sequence length="184" mass="20469">MRHRLFTLVLGLAVLITAGCGFHLRGTTQVPAQLQTLVLDSSDPYGPLTRAVREQLRLSDVKIVDDATRQDIPSLRVLSSSETRDTVSIFQDGKTAEYQMVLTLQAQVLMPGEDIYPLSVTVFRTFFDNPLAALAKDAEQDIVRQEMREQAAQQLVRKLLTINGSQEVKNRLQSTDSPTAAKRS</sequence>
<accession>Q6D7L7</accession>
<name>LPTE_PECAS</name>
<keyword id="KW-0998">Cell outer membrane</keyword>
<keyword id="KW-0449">Lipoprotein</keyword>
<keyword id="KW-0472">Membrane</keyword>
<keyword id="KW-0564">Palmitate</keyword>
<keyword id="KW-1185">Reference proteome</keyword>
<keyword id="KW-0732">Signal</keyword>
<proteinExistence type="inferred from homology"/>
<protein>
    <recommendedName>
        <fullName evidence="1">LPS-assembly lipoprotein LptE</fullName>
    </recommendedName>
</protein>
<dbReference type="EMBL" id="BX950851">
    <property type="protein sequence ID" value="CAG74218.1"/>
    <property type="molecule type" value="Genomic_DNA"/>
</dbReference>
<dbReference type="RefSeq" id="WP_011092894.1">
    <property type="nucleotide sequence ID" value="NC_004547.2"/>
</dbReference>
<dbReference type="SMR" id="Q6D7L7"/>
<dbReference type="STRING" id="218491.ECA1308"/>
<dbReference type="DNASU" id="2884719"/>
<dbReference type="GeneID" id="57208118"/>
<dbReference type="KEGG" id="eca:ECA1308"/>
<dbReference type="PATRIC" id="fig|218491.5.peg.1334"/>
<dbReference type="eggNOG" id="COG2980">
    <property type="taxonomic scope" value="Bacteria"/>
</dbReference>
<dbReference type="HOGENOM" id="CLU_103309_1_1_6"/>
<dbReference type="OrthoDB" id="5801564at2"/>
<dbReference type="Proteomes" id="UP000007966">
    <property type="component" value="Chromosome"/>
</dbReference>
<dbReference type="GO" id="GO:0009279">
    <property type="term" value="C:cell outer membrane"/>
    <property type="evidence" value="ECO:0007669"/>
    <property type="project" value="UniProtKB-SubCell"/>
</dbReference>
<dbReference type="GO" id="GO:1990351">
    <property type="term" value="C:transporter complex"/>
    <property type="evidence" value="ECO:0007669"/>
    <property type="project" value="TreeGrafter"/>
</dbReference>
<dbReference type="GO" id="GO:0001530">
    <property type="term" value="F:lipopolysaccharide binding"/>
    <property type="evidence" value="ECO:0007669"/>
    <property type="project" value="TreeGrafter"/>
</dbReference>
<dbReference type="GO" id="GO:0043165">
    <property type="term" value="P:Gram-negative-bacterium-type cell outer membrane assembly"/>
    <property type="evidence" value="ECO:0007669"/>
    <property type="project" value="UniProtKB-UniRule"/>
</dbReference>
<dbReference type="GO" id="GO:0015920">
    <property type="term" value="P:lipopolysaccharide transport"/>
    <property type="evidence" value="ECO:0007669"/>
    <property type="project" value="TreeGrafter"/>
</dbReference>
<dbReference type="Gene3D" id="3.30.160.150">
    <property type="entry name" value="Lipoprotein like domain"/>
    <property type="match status" value="1"/>
</dbReference>
<dbReference type="HAMAP" id="MF_01186">
    <property type="entry name" value="LPS_assembly_LptE"/>
    <property type="match status" value="1"/>
</dbReference>
<dbReference type="InterPro" id="IPR007485">
    <property type="entry name" value="LPS_assembly_LptE"/>
</dbReference>
<dbReference type="NCBIfam" id="NF008062">
    <property type="entry name" value="PRK10796.1"/>
    <property type="match status" value="1"/>
</dbReference>
<dbReference type="PANTHER" id="PTHR38098">
    <property type="entry name" value="LPS-ASSEMBLY LIPOPROTEIN LPTE"/>
    <property type="match status" value="1"/>
</dbReference>
<dbReference type="PANTHER" id="PTHR38098:SF1">
    <property type="entry name" value="LPS-ASSEMBLY LIPOPROTEIN LPTE"/>
    <property type="match status" value="1"/>
</dbReference>
<dbReference type="Pfam" id="PF04390">
    <property type="entry name" value="LptE"/>
    <property type="match status" value="1"/>
</dbReference>
<dbReference type="PROSITE" id="PS51257">
    <property type="entry name" value="PROKAR_LIPOPROTEIN"/>
    <property type="match status" value="1"/>
</dbReference>
<gene>
    <name evidence="1" type="primary">lptE</name>
    <name type="synonym">rlpB</name>
    <name type="ordered locus">ECA1308</name>
</gene>
<evidence type="ECO:0000255" key="1">
    <source>
        <dbReference type="HAMAP-Rule" id="MF_01186"/>
    </source>
</evidence>
<organism>
    <name type="scientific">Pectobacterium atrosepticum (strain SCRI 1043 / ATCC BAA-672)</name>
    <name type="common">Erwinia carotovora subsp. atroseptica</name>
    <dbReference type="NCBI Taxonomy" id="218491"/>
    <lineage>
        <taxon>Bacteria</taxon>
        <taxon>Pseudomonadati</taxon>
        <taxon>Pseudomonadota</taxon>
        <taxon>Gammaproteobacteria</taxon>
        <taxon>Enterobacterales</taxon>
        <taxon>Pectobacteriaceae</taxon>
        <taxon>Pectobacterium</taxon>
    </lineage>
</organism>
<reference key="1">
    <citation type="journal article" date="2004" name="Proc. Natl. Acad. Sci. U.S.A.">
        <title>Genome sequence of the enterobacterial phytopathogen Erwinia carotovora subsp. atroseptica and characterization of virulence factors.</title>
        <authorList>
            <person name="Bell K.S."/>
            <person name="Sebaihia M."/>
            <person name="Pritchard L."/>
            <person name="Holden M.T.G."/>
            <person name="Hyman L.J."/>
            <person name="Holeva M.C."/>
            <person name="Thomson N.R."/>
            <person name="Bentley S.D."/>
            <person name="Churcher L.J.C."/>
            <person name="Mungall K."/>
            <person name="Atkin R."/>
            <person name="Bason N."/>
            <person name="Brooks K."/>
            <person name="Chillingworth T."/>
            <person name="Clark K."/>
            <person name="Doggett J."/>
            <person name="Fraser A."/>
            <person name="Hance Z."/>
            <person name="Hauser H."/>
            <person name="Jagels K."/>
            <person name="Moule S."/>
            <person name="Norbertczak H."/>
            <person name="Ormond D."/>
            <person name="Price C."/>
            <person name="Quail M.A."/>
            <person name="Sanders M."/>
            <person name="Walker D."/>
            <person name="Whitehead S."/>
            <person name="Salmond G.P.C."/>
            <person name="Birch P.R.J."/>
            <person name="Parkhill J."/>
            <person name="Toth I.K."/>
        </authorList>
    </citation>
    <scope>NUCLEOTIDE SEQUENCE [LARGE SCALE GENOMIC DNA]</scope>
    <source>
        <strain>SCRI 1043 / ATCC BAA-672</strain>
    </source>
</reference>
<comment type="function">
    <text evidence="1">Together with LptD, is involved in the assembly of lipopolysaccharide (LPS) at the surface of the outer membrane. Required for the proper assembly of LptD. Binds LPS and may serve as the LPS recognition site at the outer membrane.</text>
</comment>
<comment type="subunit">
    <text evidence="1">Component of the lipopolysaccharide transport and assembly complex. Interacts with LptD.</text>
</comment>
<comment type="subcellular location">
    <subcellularLocation>
        <location evidence="1">Cell outer membrane</location>
        <topology evidence="1">Lipid-anchor</topology>
    </subcellularLocation>
</comment>
<comment type="similarity">
    <text evidence="1">Belongs to the LptE lipoprotein family.</text>
</comment>
<feature type="signal peptide" evidence="1">
    <location>
        <begin position="1"/>
        <end position="19"/>
    </location>
</feature>
<feature type="chain" id="PRO_0000281175" description="LPS-assembly lipoprotein LptE">
    <location>
        <begin position="20"/>
        <end position="184"/>
    </location>
</feature>
<feature type="lipid moiety-binding region" description="N-palmitoyl cysteine" evidence="1">
    <location>
        <position position="20"/>
    </location>
</feature>
<feature type="lipid moiety-binding region" description="S-diacylglycerol cysteine" evidence="1">
    <location>
        <position position="20"/>
    </location>
</feature>